<protein>
    <recommendedName>
        <fullName>Mediator of RNA polymerase II transcription subunit 22</fullName>
    </recommendedName>
    <alternativeName>
        <fullName>Mediator complex subunit 22</fullName>
    </alternativeName>
    <alternativeName>
        <fullName>Surfeit locus protein 5</fullName>
    </alternativeName>
</protein>
<organism>
    <name type="scientific">Takifugu rubripes</name>
    <name type="common">Japanese pufferfish</name>
    <name type="synonym">Fugu rubripes</name>
    <dbReference type="NCBI Taxonomy" id="31033"/>
    <lineage>
        <taxon>Eukaryota</taxon>
        <taxon>Metazoa</taxon>
        <taxon>Chordata</taxon>
        <taxon>Craniata</taxon>
        <taxon>Vertebrata</taxon>
        <taxon>Euteleostomi</taxon>
        <taxon>Actinopterygii</taxon>
        <taxon>Neopterygii</taxon>
        <taxon>Teleostei</taxon>
        <taxon>Neoteleostei</taxon>
        <taxon>Acanthomorphata</taxon>
        <taxon>Eupercaria</taxon>
        <taxon>Tetraodontiformes</taxon>
        <taxon>Tetradontoidea</taxon>
        <taxon>Tetraodontidae</taxon>
        <taxon>Takifugu</taxon>
    </lineage>
</organism>
<dbReference type="EMBL" id="Y15172">
    <property type="protein sequence ID" value="CAA75447.1"/>
    <property type="molecule type" value="Genomic_DNA"/>
</dbReference>
<dbReference type="EMBL" id="Y15172">
    <property type="protein sequence ID" value="CAA75448.1"/>
    <property type="molecule type" value="Genomic_DNA"/>
</dbReference>
<dbReference type="SMR" id="O57595"/>
<dbReference type="FunCoup" id="O57595">
    <property type="interactions" value="1155"/>
</dbReference>
<dbReference type="STRING" id="31033.ENSTRUP00000075807"/>
<dbReference type="eggNOG" id="KOG3304">
    <property type="taxonomic scope" value="Eukaryota"/>
</dbReference>
<dbReference type="InParanoid" id="O57595"/>
<dbReference type="Proteomes" id="UP000005226">
    <property type="component" value="Unplaced"/>
</dbReference>
<dbReference type="GO" id="GO:0016592">
    <property type="term" value="C:mediator complex"/>
    <property type="evidence" value="ECO:0007669"/>
    <property type="project" value="InterPro"/>
</dbReference>
<dbReference type="GO" id="GO:0003712">
    <property type="term" value="F:transcription coregulator activity"/>
    <property type="evidence" value="ECO:0007669"/>
    <property type="project" value="InterPro"/>
</dbReference>
<dbReference type="GO" id="GO:0006357">
    <property type="term" value="P:regulation of transcription by RNA polymerase II"/>
    <property type="evidence" value="ECO:0007669"/>
    <property type="project" value="InterPro"/>
</dbReference>
<dbReference type="InterPro" id="IPR009332">
    <property type="entry name" value="Med22"/>
</dbReference>
<dbReference type="PANTHER" id="PTHR12434">
    <property type="entry name" value="MEDIATOR OF RNA POLYMERASE II TRANSCRIPTION SUBUNIT 22"/>
    <property type="match status" value="1"/>
</dbReference>
<dbReference type="PANTHER" id="PTHR12434:SF6">
    <property type="entry name" value="MEDIATOR OF RNA POLYMERASE II TRANSCRIPTION SUBUNIT 22"/>
    <property type="match status" value="1"/>
</dbReference>
<dbReference type="Pfam" id="PF06179">
    <property type="entry name" value="Med22"/>
    <property type="match status" value="1"/>
</dbReference>
<accession>O57595</accession>
<accession>O73882</accession>
<gene>
    <name type="primary">med22</name>
    <name type="synonym">surf5</name>
</gene>
<feature type="chain" id="PRO_0000178840" description="Mediator of RNA polymerase II transcription subunit 22">
    <location>
        <begin position="1"/>
        <end position="200"/>
    </location>
</feature>
<feature type="region of interest" description="Disordered" evidence="3">
    <location>
        <begin position="159"/>
        <end position="200"/>
    </location>
</feature>
<feature type="coiled-coil region" evidence="2">
    <location>
        <begin position="93"/>
        <end position="123"/>
    </location>
</feature>
<feature type="compositionally biased region" description="Polar residues" evidence="3">
    <location>
        <begin position="189"/>
        <end position="200"/>
    </location>
</feature>
<feature type="splice variant" id="VSP_006310" description="In isoform Surf5A." evidence="4">
    <original>SYSQWDTDLPLCEAYHRVDNWASPSSSSSSTQGDQEEVEILPSQETEPQHHLNGQGTSSLEKM</original>
    <variation>RYK</variation>
    <location>
        <begin position="138"/>
        <end position="200"/>
    </location>
</feature>
<name>MED22_TAKRU</name>
<reference key="1">
    <citation type="journal article" date="1997" name="Genome Res.">
        <title>The comparative genomic structure and sequence of the surfeit gene homologs in the puffer fish Fugu rubripes and their association with CpG-rich islands.</title>
        <authorList>
            <person name="Armes N."/>
            <person name="Gilley J."/>
            <person name="Fried M."/>
        </authorList>
    </citation>
    <scope>NUCLEOTIDE SEQUENCE [GENOMIC DNA]</scope>
    <scope>ALTERNATIVE SPLICING</scope>
</reference>
<sequence length="200" mass="22923">MATQRVLPQSKETLLQSYNKRLKDDIKSILENFTEIIKTAKIEDETQVSRPAQAEQDHYEMHVRAANIVRAGESLMKLVSDLKQFLILNDFPSVNDAISLQNQQLRSLQEECDKKLISLRDEIAIDLYELEEEYYSSSYSQWDTDLPLCEAYHRVDNWASPSSSSSSTQGDQEEVEILPSQETEPQHHLNGQGTSSLEKM</sequence>
<proteinExistence type="inferred from homology"/>
<keyword id="KW-0010">Activator</keyword>
<keyword id="KW-0025">Alternative splicing</keyword>
<keyword id="KW-0175">Coiled coil</keyword>
<keyword id="KW-0539">Nucleus</keyword>
<keyword id="KW-1185">Reference proteome</keyword>
<keyword id="KW-0804">Transcription</keyword>
<keyword id="KW-0805">Transcription regulation</keyword>
<comment type="function">
    <text evidence="1">Component of the Mediator complex, a coactivator involved in the regulated transcription of nearly all RNA polymerase II-dependent genes. Mediator functions as a bridge to convey information from gene-specific regulatory proteins to the basal RNA polymerase II transcription machinery. Mediator is recruited to promoters by direct interactions with regulatory proteins and serves as a scaffold for the assembly of a functional preinitiation complex with RNA polymerase II and the general transcription factors (By similarity).</text>
</comment>
<comment type="subunit">
    <text evidence="1">Component of the Mediator complex.</text>
</comment>
<comment type="subcellular location">
    <subcellularLocation>
        <location evidence="4">Nucleus</location>
    </subcellularLocation>
</comment>
<comment type="alternative products">
    <event type="alternative splicing"/>
    <isoform>
        <id>O57595-1</id>
        <name>Surf5B</name>
        <sequence type="displayed"/>
    </isoform>
    <isoform>
        <id>O57595-2</id>
        <name>Surf5A</name>
        <sequence type="described" ref="VSP_006310"/>
    </isoform>
</comment>
<comment type="similarity">
    <text evidence="4">Belongs to the Mediator complex subunit 22 family.</text>
</comment>
<evidence type="ECO:0000250" key="1"/>
<evidence type="ECO:0000255" key="2"/>
<evidence type="ECO:0000256" key="3">
    <source>
        <dbReference type="SAM" id="MobiDB-lite"/>
    </source>
</evidence>
<evidence type="ECO:0000305" key="4"/>